<keyword id="KW-0002">3D-structure</keyword>
<keyword id="KW-1003">Cell membrane</keyword>
<keyword id="KW-1015">Disulfide bond</keyword>
<keyword id="KW-0325">Glycoprotein</keyword>
<keyword id="KW-0407">Ion channel</keyword>
<keyword id="KW-0406">Ion transport</keyword>
<keyword id="KW-0472">Membrane</keyword>
<keyword id="KW-1185">Reference proteome</keyword>
<keyword id="KW-0677">Repeat</keyword>
<keyword id="KW-0915">Sodium</keyword>
<keyword id="KW-0894">Sodium channel</keyword>
<keyword id="KW-0739">Sodium transport</keyword>
<keyword id="KW-0812">Transmembrane</keyword>
<keyword id="KW-1133">Transmembrane helix</keyword>
<keyword id="KW-0813">Transport</keyword>
<keyword id="KW-0851">Voltage-gated channel</keyword>
<accession>P02719</accession>
<feature type="chain" id="PRO_0000048513" description="Sodium channel protein">
    <location>
        <begin position="1"/>
        <end position="1820"/>
    </location>
</feature>
<feature type="topological domain" description="Cytoplasmic" evidence="5">
    <location>
        <begin position="1"/>
        <end position="117"/>
    </location>
</feature>
<feature type="transmembrane region" description="Helical; Name=S1 of repeat I">
    <location>
        <begin position="118"/>
        <end position="138"/>
    </location>
</feature>
<feature type="topological domain" description="Extracellular" evidence="5">
    <location>
        <begin position="139"/>
        <end position="149"/>
    </location>
</feature>
<feature type="transmembrane region" description="Helical; Name=S2 of repeat I">
    <location>
        <begin position="150"/>
        <end position="171"/>
    </location>
</feature>
<feature type="topological domain" description="Cytoplasmic" evidence="5">
    <location>
        <begin position="172"/>
        <end position="176"/>
    </location>
</feature>
<feature type="transmembrane region" description="Helical; Name=S3 of repeat I">
    <location>
        <begin position="177"/>
        <end position="197"/>
    </location>
</feature>
<feature type="topological domain" description="Extracellular" evidence="5">
    <location>
        <begin position="198"/>
        <end position="203"/>
    </location>
</feature>
<feature type="transmembrane region" description="Helical; Voltage-sensor; Name=S4 of repeat I">
    <location>
        <begin position="204"/>
        <end position="224"/>
    </location>
</feature>
<feature type="topological domain" description="Cytoplasmic" evidence="5">
    <location>
        <begin position="225"/>
        <end position="243"/>
    </location>
</feature>
<feature type="transmembrane region" description="Helical; Name=S5 of repeat I">
    <location>
        <begin position="244"/>
        <end position="264"/>
    </location>
</feature>
<feature type="topological domain" description="Extracellular" evidence="5">
    <location>
        <begin position="265"/>
        <end position="346"/>
    </location>
</feature>
<feature type="intramembrane region" description="Pore-forming" evidence="1">
    <location>
        <begin position="347"/>
        <end position="371"/>
    </location>
</feature>
<feature type="topological domain" description="Extracellular" evidence="5">
    <location>
        <begin position="372"/>
        <end position="378"/>
    </location>
</feature>
<feature type="transmembrane region" description="Helical; Name=S6 of repeat I">
    <location>
        <begin position="379"/>
        <end position="402"/>
    </location>
</feature>
<feature type="topological domain" description="Cytoplasmic" evidence="5">
    <location>
        <begin position="403"/>
        <end position="557"/>
    </location>
</feature>
<feature type="transmembrane region" description="Helical; Name=S1 of repeat II">
    <location>
        <begin position="558"/>
        <end position="578"/>
    </location>
</feature>
<feature type="topological domain" description="Extracellular" evidence="5">
    <location>
        <begin position="579"/>
        <end position="599"/>
    </location>
</feature>
<feature type="transmembrane region" description="Helical; Name=S2 of repeat II">
    <location>
        <begin position="600"/>
        <end position="620"/>
    </location>
</feature>
<feature type="topological domain" description="Cytoplasmic" evidence="5">
    <location>
        <begin position="621"/>
        <end position="625"/>
    </location>
</feature>
<feature type="transmembrane region" description="Helical; Name=S3 of repeat II">
    <location>
        <begin position="626"/>
        <end position="643"/>
    </location>
</feature>
<feature type="topological domain" description="Extracellular" evidence="5">
    <location>
        <begin position="644"/>
        <end position="650"/>
    </location>
</feature>
<feature type="transmembrane region" description="Helical; Voltage-sensor; Name=S4 of repeat II">
    <location>
        <begin position="651"/>
        <end position="671"/>
    </location>
</feature>
<feature type="topological domain" description="Cytoplasmic" evidence="5">
    <location>
        <begin position="672"/>
        <end position="690"/>
    </location>
</feature>
<feature type="transmembrane region" description="Helical; Name=S5 of repeat II">
    <location>
        <begin position="691"/>
        <end position="711"/>
    </location>
</feature>
<feature type="topological domain" description="Extracellular" evidence="5">
    <location>
        <begin position="712"/>
        <end position="734"/>
    </location>
</feature>
<feature type="intramembrane region" description="Pore-forming" evidence="1">
    <location>
        <begin position="735"/>
        <end position="755"/>
    </location>
</feature>
<feature type="topological domain" description="Extracellular" evidence="5">
    <location>
        <begin position="756"/>
        <end position="766"/>
    </location>
</feature>
<feature type="transmembrane region" description="Helical; Name=S6 of repeat II">
    <location>
        <begin position="767"/>
        <end position="790"/>
    </location>
</feature>
<feature type="topological domain" description="Cytoplasmic" evidence="5">
    <location>
        <begin position="791"/>
        <end position="1004"/>
    </location>
</feature>
<feature type="transmembrane region" description="Helical; Name=S1 of repeat III">
    <location>
        <begin position="1005"/>
        <end position="1025"/>
    </location>
</feature>
<feature type="topological domain" description="Extracellular" evidence="5">
    <location>
        <begin position="1026"/>
        <end position="1037"/>
    </location>
</feature>
<feature type="transmembrane region" description="Helical; Name=S2 of repeat III">
    <location>
        <begin position="1038"/>
        <end position="1058"/>
    </location>
</feature>
<feature type="topological domain" description="Cytoplasmic" evidence="5">
    <location>
        <begin position="1059"/>
        <end position="1065"/>
    </location>
</feature>
<feature type="transmembrane region" description="Helical; Name=S3 of repeat III">
    <location>
        <begin position="1066"/>
        <end position="1086"/>
    </location>
</feature>
<feature type="topological domain" description="Extracellular" evidence="5">
    <location>
        <begin position="1087"/>
        <end position="1091"/>
    </location>
</feature>
<feature type="transmembrane region" description="Helical; Voltage-sensor; Name=S4 of repeat III">
    <location>
        <begin position="1092"/>
        <end position="1112"/>
    </location>
</feature>
<feature type="topological domain" description="Cytoplasmic" evidence="5">
    <location>
        <begin position="1113"/>
        <end position="1131"/>
    </location>
</feature>
<feature type="transmembrane region" description="Helical; Name=S5 of repeat III">
    <location>
        <begin position="1132"/>
        <end position="1152"/>
    </location>
</feature>
<feature type="topological domain" description="Extracellular" evidence="5">
    <location>
        <begin position="1153"/>
        <end position="1199"/>
    </location>
</feature>
<feature type="intramembrane region" description="Pore-forming" evidence="1">
    <location>
        <begin position="1200"/>
        <end position="1221"/>
    </location>
</feature>
<feature type="topological domain" description="Extracellular" evidence="5">
    <location>
        <begin position="1222"/>
        <end position="1243"/>
    </location>
</feature>
<feature type="transmembrane region" description="Helical; Name=S6 of repeat III">
    <location>
        <begin position="1244"/>
        <end position="1264"/>
    </location>
</feature>
<feature type="topological domain" description="Cytoplasmic" evidence="5">
    <location>
        <begin position="1265"/>
        <end position="1320"/>
    </location>
</feature>
<feature type="transmembrane region" description="Helical; Name=S1 of repeat IV">
    <location>
        <begin position="1321"/>
        <end position="1341"/>
    </location>
</feature>
<feature type="topological domain" description="Extracellular" evidence="5">
    <location>
        <begin position="1342"/>
        <end position="1352"/>
    </location>
</feature>
<feature type="transmembrane region" description="Helical; Name=S2 of repeat IV">
    <location>
        <begin position="1353"/>
        <end position="1376"/>
    </location>
</feature>
<feature type="topological domain" description="Cytoplasmic" evidence="5">
    <location>
        <begin position="1377"/>
        <end position="1380"/>
    </location>
</feature>
<feature type="transmembrane region" description="Helical; Name=S3 of repeat IV">
    <location>
        <begin position="1381"/>
        <end position="1398"/>
    </location>
</feature>
<feature type="topological domain" description="Extracellular" evidence="5">
    <location>
        <begin position="1399"/>
        <end position="1416"/>
    </location>
</feature>
<feature type="transmembrane region" description="Helical; Voltage-sensor; Name=S4 of repeat IV">
    <location>
        <begin position="1417"/>
        <end position="1437"/>
    </location>
</feature>
<feature type="topological domain" description="Cytoplasmic" evidence="5">
    <location>
        <begin position="1438"/>
        <end position="1453"/>
    </location>
</feature>
<feature type="transmembrane region" description="Helical; Name=S5 of repeat IV">
    <location>
        <begin position="1454"/>
        <end position="1474"/>
    </location>
</feature>
<feature type="topological domain" description="Extracellular" evidence="5">
    <location>
        <begin position="1475"/>
        <end position="1490"/>
    </location>
</feature>
<feature type="intramembrane region" description="Pore-forming" evidence="1">
    <location>
        <begin position="1491"/>
        <end position="1513"/>
    </location>
</feature>
<feature type="topological domain" description="Extracellular" evidence="5">
    <location>
        <begin position="1514"/>
        <end position="1543"/>
    </location>
</feature>
<feature type="transmembrane region" description="Helical; Name=S6 of repeat IV">
    <location>
        <begin position="1544"/>
        <end position="1567"/>
    </location>
</feature>
<feature type="topological domain" description="Cytoplasmic" evidence="5">
    <location>
        <begin position="1568"/>
        <end position="1820"/>
    </location>
</feature>
<feature type="repeat" description="I" evidence="5">
    <location>
        <begin position="108"/>
        <end position="410"/>
    </location>
</feature>
<feature type="repeat" description="II" evidence="5">
    <location>
        <begin position="548"/>
        <end position="811"/>
    </location>
</feature>
<feature type="repeat" description="III" evidence="5">
    <location>
        <begin position="988"/>
        <end position="1295"/>
    </location>
</feature>
<feature type="repeat" description="IV" evidence="5">
    <location>
        <begin position="1304"/>
        <end position="1602"/>
    </location>
</feature>
<feature type="region of interest" description="Non-homologous region of repeat I">
    <location>
        <begin position="285"/>
        <end position="342"/>
    </location>
</feature>
<feature type="region of interest" description="Disordered" evidence="3">
    <location>
        <begin position="483"/>
        <end position="507"/>
    </location>
</feature>
<feature type="region of interest" description="Disordered" evidence="3">
    <location>
        <begin position="844"/>
        <end position="864"/>
    </location>
</feature>
<feature type="region of interest" description="Disordered" evidence="3">
    <location>
        <begin position="891"/>
        <end position="959"/>
    </location>
</feature>
<feature type="region of interest" description="Non-homologous region of repeat III">
    <location>
        <begin position="1172"/>
        <end position="1194"/>
    </location>
</feature>
<feature type="region of interest" description="Non-homologous region of repeat IV">
    <location>
        <begin position="1490"/>
        <end position="1505"/>
    </location>
</feature>
<feature type="compositionally biased region" description="Basic and acidic residues" evidence="3">
    <location>
        <begin position="487"/>
        <end position="507"/>
    </location>
</feature>
<feature type="compositionally biased region" description="Acidic residues" evidence="3">
    <location>
        <begin position="896"/>
        <end position="910"/>
    </location>
</feature>
<feature type="compositionally biased region" description="Polar residues" evidence="3">
    <location>
        <begin position="924"/>
        <end position="935"/>
    </location>
</feature>
<feature type="compositionally biased region" description="Acidic residues" evidence="3">
    <location>
        <begin position="942"/>
        <end position="953"/>
    </location>
</feature>
<feature type="glycosylation site" description="N-linked (GlcNAc...) asparagine" evidence="2">
    <location>
        <position position="278"/>
    </location>
</feature>
<feature type="glycosylation site" description="N-linked (GlcNAc...) asparagine" evidence="2">
    <location>
        <position position="288"/>
    </location>
</feature>
<feature type="glycosylation site" description="N-linked (GlcNAc...) asparagine" evidence="2">
    <location>
        <position position="317"/>
    </location>
</feature>
<feature type="glycosylation site" description="N-linked (GlcNAc...) asparagine" evidence="2">
    <location>
        <position position="591"/>
    </location>
</feature>
<feature type="glycosylation site" description="N-linked (GlcNAc...) asparagine" evidence="2">
    <location>
        <position position="1160"/>
    </location>
</feature>
<feature type="glycosylation site" description="N-linked (GlcNAc...) asparagine" evidence="2">
    <location>
        <position position="1174"/>
    </location>
</feature>
<feature type="disulfide bond" evidence="1">
    <location>
        <begin position="271"/>
        <end position="324"/>
    </location>
</feature>
<feature type="disulfide bond" evidence="1">
    <location>
        <begin position="757"/>
        <end position="766"/>
    </location>
</feature>
<comment type="function">
    <text evidence="4">Mediates the voltage-dependent sodium ion permeability of excitable membranes. Assuming opened or closed conformations in response to the voltage difference across the membrane, the protein forms a sodium-selective channel through which Na(+) ions may pass in accordance with their electrochemical gradient.</text>
</comment>
<comment type="subcellular location">
    <subcellularLocation>
        <location evidence="4">Cell membrane</location>
        <topology evidence="1">Multi-pass membrane protein</topology>
    </subcellularLocation>
</comment>
<comment type="domain">
    <text evidence="6">The sequence contains 4 internal repeats, each with 5 hydrophobic segments (S1, S2, S3, S5, S6) and one positively charged segment (S4). Segments S4 are probably the voltage-sensors and are characterized by a series of positively charged amino acids at every third position.</text>
</comment>
<comment type="miscellaneous">
    <text evidence="6">Available data suggest that activation and inactivation gates are located near the cytoplasmic surface of the membrane. It is hypothesized that residues 802-806, 847-857, 894-910, and 942-955 might, in conjunction with the positively charged residues of S4, act as a voltage sensor involved with the activation gate.</text>
</comment>
<comment type="similarity">
    <text evidence="5">Belongs to the sodium channel (TC 1.A.1.10) family.</text>
</comment>
<dbReference type="EMBL" id="X01119">
    <property type="protein sequence ID" value="CAA25587.1"/>
    <property type="molecule type" value="mRNA"/>
</dbReference>
<dbReference type="EMBL" id="M22252">
    <property type="protein sequence ID" value="AAA79960.1"/>
    <property type="molecule type" value="mRNA"/>
</dbReference>
<dbReference type="PIR" id="A03178">
    <property type="entry name" value="CHEE"/>
</dbReference>
<dbReference type="PDB" id="5XSY">
    <property type="method" value="EM"/>
    <property type="resolution" value="4.00 A"/>
    <property type="chains" value="A=1-1820"/>
</dbReference>
<dbReference type="PDBsum" id="5XSY"/>
<dbReference type="BMRB" id="P02719"/>
<dbReference type="EMDB" id="EMD-6770"/>
<dbReference type="SMR" id="P02719"/>
<dbReference type="STRING" id="8005.ENSEEEP00000026793"/>
<dbReference type="TCDB" id="1.A.1.10.19">
    <property type="family name" value="the voltage-gated ion channel (vic) superfamily"/>
</dbReference>
<dbReference type="iPTMnet" id="P02719"/>
<dbReference type="Proteomes" id="UP000314983">
    <property type="component" value="Unassembled WGS sequence"/>
</dbReference>
<dbReference type="GO" id="GO:0001518">
    <property type="term" value="C:voltage-gated sodium channel complex"/>
    <property type="evidence" value="ECO:0007669"/>
    <property type="project" value="InterPro"/>
</dbReference>
<dbReference type="GO" id="GO:0005248">
    <property type="term" value="F:voltage-gated sodium channel activity"/>
    <property type="evidence" value="ECO:0007669"/>
    <property type="project" value="InterPro"/>
</dbReference>
<dbReference type="GO" id="GO:0086010">
    <property type="term" value="P:membrane depolarization during action potential"/>
    <property type="evidence" value="ECO:0007669"/>
    <property type="project" value="TreeGrafter"/>
</dbReference>
<dbReference type="GO" id="GO:0019228">
    <property type="term" value="P:neuronal action potential"/>
    <property type="evidence" value="ECO:0007669"/>
    <property type="project" value="TreeGrafter"/>
</dbReference>
<dbReference type="CDD" id="cd13433">
    <property type="entry name" value="Na_channel_gate"/>
    <property type="match status" value="1"/>
</dbReference>
<dbReference type="FunFam" id="1.10.287.70:FF:000001">
    <property type="entry name" value="Sodium channel protein"/>
    <property type="match status" value="1"/>
</dbReference>
<dbReference type="FunFam" id="1.20.120.350:FF:000002">
    <property type="entry name" value="Sodium channel protein"/>
    <property type="match status" value="1"/>
</dbReference>
<dbReference type="FunFam" id="1.20.120.350:FF:000004">
    <property type="entry name" value="Sodium channel protein"/>
    <property type="match status" value="1"/>
</dbReference>
<dbReference type="FunFam" id="1.20.120.350:FF:000005">
    <property type="entry name" value="Sodium channel protein"/>
    <property type="match status" value="1"/>
</dbReference>
<dbReference type="FunFam" id="1.20.120.350:FF:000003">
    <property type="entry name" value="Voltage-dependent sodium channel"/>
    <property type="match status" value="1"/>
</dbReference>
<dbReference type="FunFam" id="1.10.287.70:FF:000049">
    <property type="entry name" value="Voltage-dependent sodium channel 2"/>
    <property type="match status" value="1"/>
</dbReference>
<dbReference type="Gene3D" id="1.10.287.70">
    <property type="match status" value="4"/>
</dbReference>
<dbReference type="Gene3D" id="1.10.238.10">
    <property type="entry name" value="EF-hand"/>
    <property type="match status" value="1"/>
</dbReference>
<dbReference type="Gene3D" id="1.20.5.1190">
    <property type="entry name" value="iswi atpase"/>
    <property type="match status" value="1"/>
</dbReference>
<dbReference type="Gene3D" id="1.20.120.350">
    <property type="entry name" value="Voltage-gated potassium channels. Chain C"/>
    <property type="match status" value="4"/>
</dbReference>
<dbReference type="InterPro" id="IPR005821">
    <property type="entry name" value="Ion_trans_dom"/>
</dbReference>
<dbReference type="InterPro" id="IPR001696">
    <property type="entry name" value="Na_channel_asu"/>
</dbReference>
<dbReference type="InterPro" id="IPR044564">
    <property type="entry name" value="Na_chnl_inactivation_gate"/>
</dbReference>
<dbReference type="InterPro" id="IPR010526">
    <property type="entry name" value="Na_trans_assoc_dom"/>
</dbReference>
<dbReference type="InterPro" id="IPR043203">
    <property type="entry name" value="VGCC_Ca_Na"/>
</dbReference>
<dbReference type="InterPro" id="IPR027359">
    <property type="entry name" value="Volt_channel_dom_sf"/>
</dbReference>
<dbReference type="PANTHER" id="PTHR10037:SF223">
    <property type="entry name" value="SODIUM CHANNEL PROTEIN TYPE 4 SUBUNIT ALPHA"/>
    <property type="match status" value="1"/>
</dbReference>
<dbReference type="PANTHER" id="PTHR10037">
    <property type="entry name" value="VOLTAGE-GATED CATION CHANNEL CALCIUM AND SODIUM"/>
    <property type="match status" value="1"/>
</dbReference>
<dbReference type="Pfam" id="PF00520">
    <property type="entry name" value="Ion_trans"/>
    <property type="match status" value="4"/>
</dbReference>
<dbReference type="Pfam" id="PF24609">
    <property type="entry name" value="IQ_SCN5A_C"/>
    <property type="match status" value="1"/>
</dbReference>
<dbReference type="Pfam" id="PF06512">
    <property type="entry name" value="Na_trans_assoc"/>
    <property type="match status" value="1"/>
</dbReference>
<dbReference type="PRINTS" id="PR00170">
    <property type="entry name" value="NACHANNEL"/>
</dbReference>
<dbReference type="SUPFAM" id="SSF81324">
    <property type="entry name" value="Voltage-gated potassium channels"/>
    <property type="match status" value="4"/>
</dbReference>
<protein>
    <recommendedName>
        <fullName>Sodium channel protein</fullName>
    </recommendedName>
    <alternativeName>
        <fullName>Na(+) channel</fullName>
    </alternativeName>
</protein>
<reference key="1">
    <citation type="journal article" date="1984" name="Nature">
        <title>Primary structure of Electrophorus electricus sodium channel deduced from cDNA sequence.</title>
        <authorList>
            <person name="Noda M."/>
            <person name="Shimizu S."/>
            <person name="Tanabe T."/>
            <person name="Takai T."/>
            <person name="Kayano T."/>
            <person name="Ikeda T."/>
            <person name="Takahashi H."/>
            <person name="Nakayama H."/>
            <person name="Kanaoka Y."/>
            <person name="Minamino N."/>
            <person name="Kangawa K."/>
            <person name="Matsuo H."/>
            <person name="Raftery M.A."/>
            <person name="Hirose T."/>
            <person name="Inayama S."/>
            <person name="Hayashida H."/>
            <person name="Miyata T."/>
            <person name="Numa S."/>
        </authorList>
    </citation>
    <scope>NUCLEOTIDE SEQUENCE [MRNA]</scope>
</reference>
<reference key="2">
    <citation type="journal article" date="1987" name="J. Recept. Res.">
        <title>Structure and function of sodium channel.</title>
        <authorList>
            <person name="Noda M."/>
            <person name="Numa S."/>
        </authorList>
    </citation>
    <scope>NUCLEOTIDE SEQUENCE [MRNA]</scope>
    <scope>FUNCTION</scope>
    <scope>SUBCELLULAR LOCATION</scope>
</reference>
<sequence>MARKFSSARPEMFRRFTPDSLEEIEAFTELKKSCTLEKKEPESTPRIDLEAGKPLPMIYGDPPEDLLNIPLEDLDPFYKTQKTFIVISKGNIINRFNAERALYIFSPFNPIRRGAIRVFVNSAFNFFIMFTIFSNCIFMTISNPPAWSKIVEYTFTGIYTFEVIVKVLSRGFCIGHFTFLRDPWNWLDFSVVTMTYITEFIDLRNVSALRTFRVLRALKTITIFPGLKTIVRALIESMKQMGDVVILTVFSLAVFTLAGMQLFMGNLRHKCIRWPISNVTLDYESAYNTTFDFTAYIENEENQYFLDGALDALLCGNNSDAGKCPEGYTCMKAGRNPNYGYTNYDNFAWTFLCLFRLMLQDYWENLYQMTLRAAGKSYMVFFIMVIFLGSFYLINLILAVVAMAYEEQNQATLAEAQEKEAEFQRAVEQLRIQQEQINDERKASLASQLTQNQEAEITDDGDDAIKECNGKAFPLANIREPSSVKLSTEEQRSDSKSMDSKHSVDKPSLKHKAASTMSVFTLEDLEAARRPCPPVWYKFAGFVFKWNCCGPWVFLKKWVHFVMMDPFTDLFITLCIILNTLFMSIEHHPMNESFQSLLSAGNLVFTTIFAAEMVLKIIALDPYYYFQQTWNIFDSIIVSLSLLELGLSNMQGMSVLRSLRLLRIFKLAKSWPTLNILIKIICNSVGALGNLTIVLAIIVFIFALVGFQLFGKNYKEYVCKISDDCELPRWHMNDFFHSFLIVFRALCGEWIETMWDCMEVGGVPMCLAVYMMVIIIGNLVMLNLFLALLLSSFSSDNLSSIEEDDEVNSLQVASERISRAKNWVKIFITGTVQALVLWIQGKKPPSDDVVGEEGDNEGKKDTLPLNYLDGEKIVDGITNCVESPTLNLPIVKGESEIEEEGLVDSSDEEDTNKKKHALNDEDSSVCSTVDYSPSEQDPLAKEEEEEEEEEPEELESKDPEACFTEKCIWRFPFLDVDITQGKGKIWWNLRRTCYTIVEHDYFETFIIFMILLSSGVLAFEDIYIWRRRVIKVILEYADKVFTYVFIVEMLLKWVAYGFKRYFTDAWCWLDFVIVGASIMGITSSLLGYEELGAIKNLRTIRALRPLRALSRFEGMKVVVRALLGAIPSIMNVLLVCLMFWLIFSIMGVNLFAGKFYRCINTTTDEILPVEEVNNRSDCMALMYTNEVRWVNLKVNYDNAGMGYLSLLQVSTFKGWMDIMYAAVDSREVEDQPIYEINVYMYLYFVIFIVFGAFFTLNLFIGVIIDNFNRQKQKLGGEDLFMTEEQKKYYNAMKKLGSKKAAKCIPRPSNVVQGVVYDIVTQPFTDIFIMALICINMVAMMVESEDQSQVKKDILSQINVIFVIIFTVECLLKLLALRQYFFTVGWNVFDFAVVVISIIGLLLSDIIEKYFVSPTLFRVIRLARIARVLRLIRAAKGIRTLLFALMMSLPALFNIGLLLFLIMFIFSIFGMSNFAYVKKQGGVDDIFNFETFGNSMICLFEITTSAGWDGLLLPTLNTGPPDCDPDVENPGTDVRGNCGNPGKGITFFCSYIILSFLVVVNMYIAIILENFGVAQEESSDLLCEDDFVMFDETWHKFDVHGTQFLDYNDLPRFVNALQEPMRIPNPNRHKLAKMDMYVVMEDKISYLDVLLAVTQEVLGDTTEMEAMRLSIQAKFKKDNPSPTFFEPVVTTLRRKEEEWASVVIQRAFRQYLLMRAVSHASFLSQIKHMNEGPKDGVGSQDSLITQKMNALYRGNPELTMPLEQQIKPMLDKPRMPSLSVPETYPIQIPKEVTNEVILHSAPMVRQNYSYSGAIVVRESIV</sequence>
<proteinExistence type="evidence at protein level"/>
<organism>
    <name type="scientific">Electrophorus electricus</name>
    <name type="common">Electric eel</name>
    <name type="synonym">Gymnotus electricus</name>
    <dbReference type="NCBI Taxonomy" id="8005"/>
    <lineage>
        <taxon>Eukaryota</taxon>
        <taxon>Metazoa</taxon>
        <taxon>Chordata</taxon>
        <taxon>Craniata</taxon>
        <taxon>Vertebrata</taxon>
        <taxon>Euteleostomi</taxon>
        <taxon>Actinopterygii</taxon>
        <taxon>Neopterygii</taxon>
        <taxon>Teleostei</taxon>
        <taxon>Ostariophysi</taxon>
        <taxon>Gymnotiformes</taxon>
        <taxon>Gymnotoidei</taxon>
        <taxon>Gymnotidae</taxon>
        <taxon>Electrophorus</taxon>
    </lineage>
</organism>
<evidence type="ECO:0000250" key="1">
    <source>
        <dbReference type="UniProtKB" id="D0E0C2"/>
    </source>
</evidence>
<evidence type="ECO:0000255" key="2"/>
<evidence type="ECO:0000256" key="3">
    <source>
        <dbReference type="SAM" id="MobiDB-lite"/>
    </source>
</evidence>
<evidence type="ECO:0000269" key="4">
    <source>
    </source>
</evidence>
<evidence type="ECO:0000305" key="5"/>
<evidence type="ECO:0000305" key="6">
    <source>
    </source>
</evidence>
<name>SCNA_ELEEL</name>